<evidence type="ECO:0000255" key="1">
    <source>
        <dbReference type="HAMAP-Rule" id="MF_00049"/>
    </source>
</evidence>
<sequence>MQEQYRPDLIEADVQKYWAEKKTFKAVKDPFKEKYYCLSMFPYPSGRLHMGHVRNYTIGDVISRYQRMNGKNVLQPMGWDAFGLPAEGAAIKNKTAPAKWTYENIEYMKNQLKVLGFGFDWDREITTCKPEYYKWEQWFFTELYKKGLVYKKTSTVNWCPNDETVLANEQVHEGGCWRCDTPVEQKEIPQWFIKITDYAEQLLSDLDQLPEWPDMVKTMQRNWIGRSEGVEITFNVAHSDQTLTVYTTRPDTFYGVSYLAVAAAHPLAENAAKNNPELAAFIHEAKNTKVAEAELATMEKKGMATGLYAVHPMTGKQLPIWVANFVLMHYGTGAVMAVPAHDQRDYEFAQKYQLPLFPVIKPADNSAWDFSKQAYTEHGITINSAEFDGLDFEATFNGIADKLEKIGVGKRQVNYRLRDWGVSRQRYWGAPIPMLTLENGDVVVAPLQDLPIVLPEDVVMDGVKSPIKADPEWAKTTYNGQVALKETDTFDTFMESSWYYARYTSPQYQQAMLDADETNYWLPVDQYIGGIEHATMHLLYFRFFHKLLRDAGFVTSDEPSKKLLCQGMVLADAFYYTSPTNERIWVSPTKVTLERDEKGRIIKAVDDEGHELVHSGMTKMSKSKNNGIDPQEMVEKYGADTVRLFMMFASPAEMTLEWQESGVEGANRFLRRLWNLVFEYNQNPAQTALDPTALSVEQKALRREVHKTIAKVSDDIGRRQTFNTAIAAIMELMNKLTKASLSNEQDRAVMAEALNAVVRMLYPITPHICFQLWQDLGNESAIDFAPWVIADAEAMVEDEKLVVIQVNGKVRAKVTVPADMSEDEIKQVALAEENVQKFLNGLTVVKTIYVPGKLFSFVAK</sequence>
<gene>
    <name evidence="1" type="primary">leuS</name>
    <name type="ordered locus">HSM_0467</name>
</gene>
<name>SYL_HISS2</name>
<proteinExistence type="inferred from homology"/>
<dbReference type="EC" id="6.1.1.4" evidence="1"/>
<dbReference type="EMBL" id="CP000947">
    <property type="protein sequence ID" value="ACA32112.1"/>
    <property type="molecule type" value="Genomic_DNA"/>
</dbReference>
<dbReference type="RefSeq" id="WP_012341304.1">
    <property type="nucleotide sequence ID" value="NC_010519.1"/>
</dbReference>
<dbReference type="SMR" id="B0URM9"/>
<dbReference type="STRING" id="228400.HSM_0467"/>
<dbReference type="GeneID" id="31486750"/>
<dbReference type="KEGG" id="hsm:HSM_0467"/>
<dbReference type="HOGENOM" id="CLU_004427_0_0_6"/>
<dbReference type="GO" id="GO:0005829">
    <property type="term" value="C:cytosol"/>
    <property type="evidence" value="ECO:0007669"/>
    <property type="project" value="TreeGrafter"/>
</dbReference>
<dbReference type="GO" id="GO:0002161">
    <property type="term" value="F:aminoacyl-tRNA deacylase activity"/>
    <property type="evidence" value="ECO:0007669"/>
    <property type="project" value="InterPro"/>
</dbReference>
<dbReference type="GO" id="GO:0005524">
    <property type="term" value="F:ATP binding"/>
    <property type="evidence" value="ECO:0007669"/>
    <property type="project" value="UniProtKB-UniRule"/>
</dbReference>
<dbReference type="GO" id="GO:0004823">
    <property type="term" value="F:leucine-tRNA ligase activity"/>
    <property type="evidence" value="ECO:0007669"/>
    <property type="project" value="UniProtKB-UniRule"/>
</dbReference>
<dbReference type="GO" id="GO:0006429">
    <property type="term" value="P:leucyl-tRNA aminoacylation"/>
    <property type="evidence" value="ECO:0007669"/>
    <property type="project" value="UniProtKB-UniRule"/>
</dbReference>
<dbReference type="CDD" id="cd07958">
    <property type="entry name" value="Anticodon_Ia_Leu_BEm"/>
    <property type="match status" value="1"/>
</dbReference>
<dbReference type="CDD" id="cd00812">
    <property type="entry name" value="LeuRS_core"/>
    <property type="match status" value="1"/>
</dbReference>
<dbReference type="FunFam" id="1.10.730.10:FF:000002">
    <property type="entry name" value="Leucine--tRNA ligase"/>
    <property type="match status" value="1"/>
</dbReference>
<dbReference type="FunFam" id="2.20.28.290:FF:000001">
    <property type="entry name" value="Leucine--tRNA ligase"/>
    <property type="match status" value="1"/>
</dbReference>
<dbReference type="FunFam" id="3.10.20.590:FF:000001">
    <property type="entry name" value="Leucine--tRNA ligase"/>
    <property type="match status" value="1"/>
</dbReference>
<dbReference type="FunFam" id="3.40.50.620:FF:000003">
    <property type="entry name" value="Leucine--tRNA ligase"/>
    <property type="match status" value="1"/>
</dbReference>
<dbReference type="FunFam" id="3.40.50.620:FF:000051">
    <property type="entry name" value="Leucine--tRNA ligase"/>
    <property type="match status" value="1"/>
</dbReference>
<dbReference type="FunFam" id="3.90.740.10:FF:000012">
    <property type="entry name" value="Leucine--tRNA ligase"/>
    <property type="match status" value="1"/>
</dbReference>
<dbReference type="Gene3D" id="2.20.28.290">
    <property type="match status" value="1"/>
</dbReference>
<dbReference type="Gene3D" id="3.10.20.590">
    <property type="match status" value="1"/>
</dbReference>
<dbReference type="Gene3D" id="3.40.50.620">
    <property type="entry name" value="HUPs"/>
    <property type="match status" value="2"/>
</dbReference>
<dbReference type="Gene3D" id="1.10.730.10">
    <property type="entry name" value="Isoleucyl-tRNA Synthetase, Domain 1"/>
    <property type="match status" value="1"/>
</dbReference>
<dbReference type="HAMAP" id="MF_00049_B">
    <property type="entry name" value="Leu_tRNA_synth_B"/>
    <property type="match status" value="1"/>
</dbReference>
<dbReference type="InterPro" id="IPR001412">
    <property type="entry name" value="aa-tRNA-synth_I_CS"/>
</dbReference>
<dbReference type="InterPro" id="IPR002300">
    <property type="entry name" value="aa-tRNA-synth_Ia"/>
</dbReference>
<dbReference type="InterPro" id="IPR002302">
    <property type="entry name" value="Leu-tRNA-ligase"/>
</dbReference>
<dbReference type="InterPro" id="IPR025709">
    <property type="entry name" value="Leu_tRNA-synth_edit"/>
</dbReference>
<dbReference type="InterPro" id="IPR013155">
    <property type="entry name" value="M/V/L/I-tRNA-synth_anticd-bd"/>
</dbReference>
<dbReference type="InterPro" id="IPR015413">
    <property type="entry name" value="Methionyl/Leucyl_tRNA_Synth"/>
</dbReference>
<dbReference type="InterPro" id="IPR014729">
    <property type="entry name" value="Rossmann-like_a/b/a_fold"/>
</dbReference>
<dbReference type="InterPro" id="IPR009080">
    <property type="entry name" value="tRNAsynth_Ia_anticodon-bd"/>
</dbReference>
<dbReference type="InterPro" id="IPR009008">
    <property type="entry name" value="Val/Leu/Ile-tRNA-synth_edit"/>
</dbReference>
<dbReference type="NCBIfam" id="TIGR00396">
    <property type="entry name" value="leuS_bact"/>
    <property type="match status" value="1"/>
</dbReference>
<dbReference type="PANTHER" id="PTHR43740:SF2">
    <property type="entry name" value="LEUCINE--TRNA LIGASE, MITOCHONDRIAL"/>
    <property type="match status" value="1"/>
</dbReference>
<dbReference type="PANTHER" id="PTHR43740">
    <property type="entry name" value="LEUCYL-TRNA SYNTHETASE"/>
    <property type="match status" value="1"/>
</dbReference>
<dbReference type="Pfam" id="PF08264">
    <property type="entry name" value="Anticodon_1"/>
    <property type="match status" value="1"/>
</dbReference>
<dbReference type="Pfam" id="PF00133">
    <property type="entry name" value="tRNA-synt_1"/>
    <property type="match status" value="2"/>
</dbReference>
<dbReference type="Pfam" id="PF13603">
    <property type="entry name" value="tRNA-synt_1_2"/>
    <property type="match status" value="1"/>
</dbReference>
<dbReference type="Pfam" id="PF09334">
    <property type="entry name" value="tRNA-synt_1g"/>
    <property type="match status" value="1"/>
</dbReference>
<dbReference type="PRINTS" id="PR00985">
    <property type="entry name" value="TRNASYNTHLEU"/>
</dbReference>
<dbReference type="SUPFAM" id="SSF47323">
    <property type="entry name" value="Anticodon-binding domain of a subclass of class I aminoacyl-tRNA synthetases"/>
    <property type="match status" value="1"/>
</dbReference>
<dbReference type="SUPFAM" id="SSF52374">
    <property type="entry name" value="Nucleotidylyl transferase"/>
    <property type="match status" value="1"/>
</dbReference>
<dbReference type="SUPFAM" id="SSF50677">
    <property type="entry name" value="ValRS/IleRS/LeuRS editing domain"/>
    <property type="match status" value="1"/>
</dbReference>
<dbReference type="PROSITE" id="PS00178">
    <property type="entry name" value="AA_TRNA_LIGASE_I"/>
    <property type="match status" value="1"/>
</dbReference>
<comment type="catalytic activity">
    <reaction evidence="1">
        <text>tRNA(Leu) + L-leucine + ATP = L-leucyl-tRNA(Leu) + AMP + diphosphate</text>
        <dbReference type="Rhea" id="RHEA:11688"/>
        <dbReference type="Rhea" id="RHEA-COMP:9613"/>
        <dbReference type="Rhea" id="RHEA-COMP:9622"/>
        <dbReference type="ChEBI" id="CHEBI:30616"/>
        <dbReference type="ChEBI" id="CHEBI:33019"/>
        <dbReference type="ChEBI" id="CHEBI:57427"/>
        <dbReference type="ChEBI" id="CHEBI:78442"/>
        <dbReference type="ChEBI" id="CHEBI:78494"/>
        <dbReference type="ChEBI" id="CHEBI:456215"/>
        <dbReference type="EC" id="6.1.1.4"/>
    </reaction>
</comment>
<comment type="subcellular location">
    <subcellularLocation>
        <location evidence="1">Cytoplasm</location>
    </subcellularLocation>
</comment>
<comment type="similarity">
    <text evidence="1">Belongs to the class-I aminoacyl-tRNA synthetase family.</text>
</comment>
<organism>
    <name type="scientific">Histophilus somni (strain 2336)</name>
    <name type="common">Haemophilus somnus</name>
    <dbReference type="NCBI Taxonomy" id="228400"/>
    <lineage>
        <taxon>Bacteria</taxon>
        <taxon>Pseudomonadati</taxon>
        <taxon>Pseudomonadota</taxon>
        <taxon>Gammaproteobacteria</taxon>
        <taxon>Pasteurellales</taxon>
        <taxon>Pasteurellaceae</taxon>
        <taxon>Histophilus</taxon>
    </lineage>
</organism>
<reference key="1">
    <citation type="submission" date="2008-02" db="EMBL/GenBank/DDBJ databases">
        <title>Complete sequence of Haemophilus somnus 2336.</title>
        <authorList>
            <consortium name="US DOE Joint Genome Institute"/>
            <person name="Siddaramappa S."/>
            <person name="Duncan A.J."/>
            <person name="Challacombe J.F."/>
            <person name="Rainey D."/>
            <person name="Gillaspy A.F."/>
            <person name="Carson M."/>
            <person name="Gipson J."/>
            <person name="Gipson M."/>
            <person name="Bruce D."/>
            <person name="Detter J.C."/>
            <person name="Han C.S."/>
            <person name="Land M."/>
            <person name="Tapia R."/>
            <person name="Thompson L.S."/>
            <person name="Orvis J."/>
            <person name="Zaitshik J."/>
            <person name="Barnes G."/>
            <person name="Brettin T.S."/>
            <person name="Dyer D.W."/>
            <person name="Inzana T.J."/>
        </authorList>
    </citation>
    <scope>NUCLEOTIDE SEQUENCE [LARGE SCALE GENOMIC DNA]</scope>
    <source>
        <strain>2336</strain>
    </source>
</reference>
<accession>B0URM9</accession>
<feature type="chain" id="PRO_1000074836" description="Leucine--tRNA ligase">
    <location>
        <begin position="1"/>
        <end position="860"/>
    </location>
</feature>
<feature type="short sequence motif" description="'HIGH' region">
    <location>
        <begin position="42"/>
        <end position="52"/>
    </location>
</feature>
<feature type="short sequence motif" description="'KMSKS' region">
    <location>
        <begin position="619"/>
        <end position="623"/>
    </location>
</feature>
<feature type="binding site" evidence="1">
    <location>
        <position position="622"/>
    </location>
    <ligand>
        <name>ATP</name>
        <dbReference type="ChEBI" id="CHEBI:30616"/>
    </ligand>
</feature>
<keyword id="KW-0030">Aminoacyl-tRNA synthetase</keyword>
<keyword id="KW-0067">ATP-binding</keyword>
<keyword id="KW-0963">Cytoplasm</keyword>
<keyword id="KW-0436">Ligase</keyword>
<keyword id="KW-0547">Nucleotide-binding</keyword>
<keyword id="KW-0648">Protein biosynthesis</keyword>
<protein>
    <recommendedName>
        <fullName evidence="1">Leucine--tRNA ligase</fullName>
        <ecNumber evidence="1">6.1.1.4</ecNumber>
    </recommendedName>
    <alternativeName>
        <fullName evidence="1">Leucyl-tRNA synthetase</fullName>
        <shortName evidence="1">LeuRS</shortName>
    </alternativeName>
</protein>